<comment type="function">
    <text evidence="1">Catalyzes the addition and repair of the essential 3'-terminal CCA sequence in tRNAs without using a nucleic acid template. Adds these three nucleotides in the order of C, C, and A to the tRNA nucleotide-73, using CTP and ATP as substrates and producing inorganic pyrophosphate. tRNA 3'-terminal CCA addition is required both for tRNA processing and repair. Also involved in tRNA surveillance by mediating tandem CCA addition to generate a CCACCA at the 3' terminus of unstable tRNAs. While stable tRNAs receive only 3'-terminal CCA, unstable tRNAs are marked with CCACCA and rapidly degraded.</text>
</comment>
<comment type="catalytic activity">
    <reaction evidence="1">
        <text>a tRNA precursor + 2 CTP + ATP = a tRNA with a 3' CCA end + 3 diphosphate</text>
        <dbReference type="Rhea" id="RHEA:14433"/>
        <dbReference type="Rhea" id="RHEA-COMP:10465"/>
        <dbReference type="Rhea" id="RHEA-COMP:10468"/>
        <dbReference type="ChEBI" id="CHEBI:30616"/>
        <dbReference type="ChEBI" id="CHEBI:33019"/>
        <dbReference type="ChEBI" id="CHEBI:37563"/>
        <dbReference type="ChEBI" id="CHEBI:74896"/>
        <dbReference type="ChEBI" id="CHEBI:83071"/>
        <dbReference type="EC" id="2.7.7.72"/>
    </reaction>
</comment>
<comment type="catalytic activity">
    <reaction evidence="1">
        <text>a tRNA with a 3' CCA end + 2 CTP + ATP = a tRNA with a 3' CCACCA end + 3 diphosphate</text>
        <dbReference type="Rhea" id="RHEA:76235"/>
        <dbReference type="Rhea" id="RHEA-COMP:10468"/>
        <dbReference type="Rhea" id="RHEA-COMP:18655"/>
        <dbReference type="ChEBI" id="CHEBI:30616"/>
        <dbReference type="ChEBI" id="CHEBI:33019"/>
        <dbReference type="ChEBI" id="CHEBI:37563"/>
        <dbReference type="ChEBI" id="CHEBI:83071"/>
        <dbReference type="ChEBI" id="CHEBI:195187"/>
    </reaction>
    <physiologicalReaction direction="left-to-right" evidence="1">
        <dbReference type="Rhea" id="RHEA:76236"/>
    </physiologicalReaction>
</comment>
<comment type="cofactor">
    <cofactor evidence="1">
        <name>Mg(2+)</name>
        <dbReference type="ChEBI" id="CHEBI:18420"/>
    </cofactor>
</comment>
<comment type="subunit">
    <text evidence="1">Homodimer.</text>
</comment>
<comment type="miscellaneous">
    <text evidence="1">A single active site specifically recognizes both ATP and CTP and is responsible for their addition.</text>
</comment>
<comment type="similarity">
    <text evidence="1">Belongs to the tRNA nucleotidyltransferase/poly(A) polymerase family. Bacterial CCA-adding enzyme type 3 subfamily.</text>
</comment>
<dbReference type="EC" id="2.7.7.72" evidence="1"/>
<dbReference type="EMBL" id="AM295007">
    <property type="protein sequence ID" value="CAM30461.1"/>
    <property type="molecule type" value="Genomic_DNA"/>
</dbReference>
<dbReference type="RefSeq" id="WP_011017668.1">
    <property type="nucleotide sequence ID" value="NC_009332.1"/>
</dbReference>
<dbReference type="SMR" id="A2RF34"/>
<dbReference type="KEGG" id="spf:SpyM51134"/>
<dbReference type="HOGENOM" id="CLU_015961_3_0_9"/>
<dbReference type="GO" id="GO:0005524">
    <property type="term" value="F:ATP binding"/>
    <property type="evidence" value="ECO:0007669"/>
    <property type="project" value="UniProtKB-UniRule"/>
</dbReference>
<dbReference type="GO" id="GO:0004810">
    <property type="term" value="F:CCA tRNA nucleotidyltransferase activity"/>
    <property type="evidence" value="ECO:0007669"/>
    <property type="project" value="UniProtKB-UniRule"/>
</dbReference>
<dbReference type="GO" id="GO:0000287">
    <property type="term" value="F:magnesium ion binding"/>
    <property type="evidence" value="ECO:0007669"/>
    <property type="project" value="UniProtKB-UniRule"/>
</dbReference>
<dbReference type="GO" id="GO:0000049">
    <property type="term" value="F:tRNA binding"/>
    <property type="evidence" value="ECO:0007669"/>
    <property type="project" value="UniProtKB-UniRule"/>
</dbReference>
<dbReference type="GO" id="GO:0042245">
    <property type="term" value="P:RNA repair"/>
    <property type="evidence" value="ECO:0007669"/>
    <property type="project" value="UniProtKB-KW"/>
</dbReference>
<dbReference type="GO" id="GO:0001680">
    <property type="term" value="P:tRNA 3'-terminal CCA addition"/>
    <property type="evidence" value="ECO:0007669"/>
    <property type="project" value="UniProtKB-UniRule"/>
</dbReference>
<dbReference type="CDD" id="cd05398">
    <property type="entry name" value="NT_ClassII-CCAase"/>
    <property type="match status" value="1"/>
</dbReference>
<dbReference type="Gene3D" id="1.10.110.30">
    <property type="match status" value="1"/>
</dbReference>
<dbReference type="Gene3D" id="1.10.246.80">
    <property type="match status" value="1"/>
</dbReference>
<dbReference type="Gene3D" id="1.20.58.560">
    <property type="match status" value="1"/>
</dbReference>
<dbReference type="Gene3D" id="3.30.460.10">
    <property type="entry name" value="Beta Polymerase, domain 2"/>
    <property type="match status" value="1"/>
</dbReference>
<dbReference type="HAMAP" id="MF_01263">
    <property type="entry name" value="CCA_bact_type3"/>
    <property type="match status" value="1"/>
</dbReference>
<dbReference type="InterPro" id="IPR050264">
    <property type="entry name" value="Bact_CCA-adding_enz_type3_sf"/>
</dbReference>
<dbReference type="InterPro" id="IPR032810">
    <property type="entry name" value="CCA-adding_enz_C"/>
</dbReference>
<dbReference type="InterPro" id="IPR023068">
    <property type="entry name" value="CCA-adding_enz_firmicutes"/>
</dbReference>
<dbReference type="InterPro" id="IPR043519">
    <property type="entry name" value="NT_sf"/>
</dbReference>
<dbReference type="InterPro" id="IPR002646">
    <property type="entry name" value="PolA_pol_head_dom"/>
</dbReference>
<dbReference type="InterPro" id="IPR032828">
    <property type="entry name" value="PolyA_RNA-bd"/>
</dbReference>
<dbReference type="NCBIfam" id="NF009814">
    <property type="entry name" value="PRK13299.1"/>
    <property type="match status" value="1"/>
</dbReference>
<dbReference type="PANTHER" id="PTHR46173">
    <property type="entry name" value="CCA TRNA NUCLEOTIDYLTRANSFERASE 1, MITOCHONDRIAL"/>
    <property type="match status" value="1"/>
</dbReference>
<dbReference type="PANTHER" id="PTHR46173:SF1">
    <property type="entry name" value="CCA TRNA NUCLEOTIDYLTRANSFERASE 1, MITOCHONDRIAL"/>
    <property type="match status" value="1"/>
</dbReference>
<dbReference type="Pfam" id="PF01743">
    <property type="entry name" value="PolyA_pol"/>
    <property type="match status" value="1"/>
</dbReference>
<dbReference type="Pfam" id="PF12627">
    <property type="entry name" value="PolyA_pol_RNAbd"/>
    <property type="match status" value="1"/>
</dbReference>
<dbReference type="Pfam" id="PF13735">
    <property type="entry name" value="tRNA_NucTran2_2"/>
    <property type="match status" value="1"/>
</dbReference>
<dbReference type="SUPFAM" id="SSF81301">
    <property type="entry name" value="Nucleotidyltransferase"/>
    <property type="match status" value="1"/>
</dbReference>
<dbReference type="SUPFAM" id="SSF81891">
    <property type="entry name" value="Poly A polymerase C-terminal region-like"/>
    <property type="match status" value="1"/>
</dbReference>
<reference key="1">
    <citation type="journal article" date="2007" name="J. Bacteriol.">
        <title>Complete genome of acute rheumatic fever-associated serotype M5 Streptococcus pyogenes strain Manfredo.</title>
        <authorList>
            <person name="Holden M.T.G."/>
            <person name="Scott A."/>
            <person name="Cherevach I."/>
            <person name="Chillingworth T."/>
            <person name="Churcher C."/>
            <person name="Cronin A."/>
            <person name="Dowd L."/>
            <person name="Feltwell T."/>
            <person name="Hamlin N."/>
            <person name="Holroyd S."/>
            <person name="Jagels K."/>
            <person name="Moule S."/>
            <person name="Mungall K."/>
            <person name="Quail M.A."/>
            <person name="Price C."/>
            <person name="Rabbinowitsch E."/>
            <person name="Sharp S."/>
            <person name="Skelton J."/>
            <person name="Whitehead S."/>
            <person name="Barrell B.G."/>
            <person name="Kehoe M."/>
            <person name="Parkhill J."/>
        </authorList>
    </citation>
    <scope>NUCLEOTIDE SEQUENCE [LARGE SCALE GENOMIC DNA]</scope>
    <source>
        <strain>Manfredo</strain>
    </source>
</reference>
<evidence type="ECO:0000255" key="1">
    <source>
        <dbReference type="HAMAP-Rule" id="MF_01263"/>
    </source>
</evidence>
<feature type="chain" id="PRO_1000054341" description="CCA-adding enzyme">
    <location>
        <begin position="1"/>
        <end position="402"/>
    </location>
</feature>
<feature type="binding site" evidence="1">
    <location>
        <position position="32"/>
    </location>
    <ligand>
        <name>ATP</name>
        <dbReference type="ChEBI" id="CHEBI:30616"/>
    </ligand>
</feature>
<feature type="binding site" evidence="1">
    <location>
        <position position="32"/>
    </location>
    <ligand>
        <name>CTP</name>
        <dbReference type="ChEBI" id="CHEBI:37563"/>
    </ligand>
</feature>
<feature type="binding site" evidence="1">
    <location>
        <position position="35"/>
    </location>
    <ligand>
        <name>ATP</name>
        <dbReference type="ChEBI" id="CHEBI:30616"/>
    </ligand>
</feature>
<feature type="binding site" evidence="1">
    <location>
        <position position="35"/>
    </location>
    <ligand>
        <name>CTP</name>
        <dbReference type="ChEBI" id="CHEBI:37563"/>
    </ligand>
</feature>
<feature type="binding site" evidence="1">
    <location>
        <position position="45"/>
    </location>
    <ligand>
        <name>Mg(2+)</name>
        <dbReference type="ChEBI" id="CHEBI:18420"/>
    </ligand>
</feature>
<feature type="binding site" evidence="1">
    <location>
        <position position="47"/>
    </location>
    <ligand>
        <name>Mg(2+)</name>
        <dbReference type="ChEBI" id="CHEBI:18420"/>
    </ligand>
</feature>
<feature type="binding site" evidence="1">
    <location>
        <position position="116"/>
    </location>
    <ligand>
        <name>ATP</name>
        <dbReference type="ChEBI" id="CHEBI:30616"/>
    </ligand>
</feature>
<feature type="binding site" evidence="1">
    <location>
        <position position="116"/>
    </location>
    <ligand>
        <name>CTP</name>
        <dbReference type="ChEBI" id="CHEBI:37563"/>
    </ligand>
</feature>
<feature type="binding site" evidence="1">
    <location>
        <position position="159"/>
    </location>
    <ligand>
        <name>ATP</name>
        <dbReference type="ChEBI" id="CHEBI:30616"/>
    </ligand>
</feature>
<feature type="binding site" evidence="1">
    <location>
        <position position="159"/>
    </location>
    <ligand>
        <name>CTP</name>
        <dbReference type="ChEBI" id="CHEBI:37563"/>
    </ligand>
</feature>
<feature type="binding site" evidence="1">
    <location>
        <position position="162"/>
    </location>
    <ligand>
        <name>ATP</name>
        <dbReference type="ChEBI" id="CHEBI:30616"/>
    </ligand>
</feature>
<feature type="binding site" evidence="1">
    <location>
        <position position="162"/>
    </location>
    <ligand>
        <name>CTP</name>
        <dbReference type="ChEBI" id="CHEBI:37563"/>
    </ligand>
</feature>
<feature type="binding site" evidence="1">
    <location>
        <position position="165"/>
    </location>
    <ligand>
        <name>ATP</name>
        <dbReference type="ChEBI" id="CHEBI:30616"/>
    </ligand>
</feature>
<feature type="binding site" evidence="1">
    <location>
        <position position="165"/>
    </location>
    <ligand>
        <name>CTP</name>
        <dbReference type="ChEBI" id="CHEBI:37563"/>
    </ligand>
</feature>
<feature type="binding site" evidence="1">
    <location>
        <position position="168"/>
    </location>
    <ligand>
        <name>ATP</name>
        <dbReference type="ChEBI" id="CHEBI:30616"/>
    </ligand>
</feature>
<feature type="binding site" evidence="1">
    <location>
        <position position="168"/>
    </location>
    <ligand>
        <name>CTP</name>
        <dbReference type="ChEBI" id="CHEBI:37563"/>
    </ligand>
</feature>
<protein>
    <recommendedName>
        <fullName evidence="1">CCA-adding enzyme</fullName>
        <ecNumber evidence="1">2.7.7.72</ecNumber>
    </recommendedName>
    <alternativeName>
        <fullName evidence="1">CCA tRNA nucleotidyltransferase</fullName>
    </alternativeName>
    <alternativeName>
        <fullName evidence="1">tRNA CCA-pyrophosphorylase</fullName>
    </alternativeName>
    <alternativeName>
        <fullName evidence="1">tRNA adenylyl-/cytidylyl- transferase</fullName>
    </alternativeName>
    <alternativeName>
        <fullName evidence="1">tRNA nucleotidyltransferase</fullName>
    </alternativeName>
    <alternativeName>
        <fullName evidence="1">tRNA-NT</fullName>
    </alternativeName>
</protein>
<accession>A2RF34</accession>
<name>CCA_STRPG</name>
<keyword id="KW-0067">ATP-binding</keyword>
<keyword id="KW-0460">Magnesium</keyword>
<keyword id="KW-0479">Metal-binding</keyword>
<keyword id="KW-0547">Nucleotide-binding</keyword>
<keyword id="KW-0548">Nucleotidyltransferase</keyword>
<keyword id="KW-0692">RNA repair</keyword>
<keyword id="KW-0694">RNA-binding</keyword>
<keyword id="KW-0808">Transferase</keyword>
<keyword id="KW-0819">tRNA processing</keyword>
<sequence length="402" mass="46159">MKLMTMPSEFQKALPILTKIKEAGYEAYFVGGSVRDVLLERPIHDVDIATSSYPEETKAIFNRTVDVGIEHGTVLVLENGGEYEITTFRTEDVYVDYRRPSQVSFVRSLEEDLKRRDFTVNALALDENGQVIDKFRGLIDLKQKRLRAVGKAEERFEEDALRIMRGFRFAASLDFDIEAATFEAMRSHSPLLEKISVERSFTEFDKLLMAPHWRKGISAMIACQAYDYLPGLKQQEAGLNHLIVSLKDNFTFSDHHQAWAYVMISLAIEDPKSFLKAWKTSNDFQRYVTKLIALYRIRQERSFEKLDIYQYGKEMASLVEDLRKAQSLSVDMDRINTLDQALVIHDKHDIVLNGSHLIKDFGMKPGPQLGLMLEKVELAIVEGRLDNDFTTIEAFVREELAP</sequence>
<gene>
    <name evidence="1" type="primary">cca</name>
    <name type="ordered locus">SpyM51134</name>
</gene>
<organism>
    <name type="scientific">Streptococcus pyogenes serotype M5 (strain Manfredo)</name>
    <dbReference type="NCBI Taxonomy" id="160491"/>
    <lineage>
        <taxon>Bacteria</taxon>
        <taxon>Bacillati</taxon>
        <taxon>Bacillota</taxon>
        <taxon>Bacilli</taxon>
        <taxon>Lactobacillales</taxon>
        <taxon>Streptococcaceae</taxon>
        <taxon>Streptococcus</taxon>
    </lineage>
</organism>
<proteinExistence type="inferred from homology"/>